<reference key="1">
    <citation type="submission" date="1997-07" db="EMBL/GenBank/DDBJ databases">
        <authorList>
            <person name="Aparna K."/>
        </authorList>
    </citation>
    <scope>NUCLEOTIDE SEQUENCE [GENOMIC DNA]</scope>
</reference>
<sequence length="512" mass="57578">MARTKATARKTVPAQQEAHGYEFGGPIGASLISFGLPIACYAFGFLCNDVSGCPPPSLLSPSKLFTPPTLSNKVPWQHALDTLAAEVGWPGWSGLINTEAVLGVFFWYGLSLLLWVLLPAHEVEGTELRTGGRLKYRFNACLSAVTIFVACAAGTIVRGPDFQVWTFINRNYIQLLTVNIIIAYALAIYVYLKSFEVKAGNTEQRELAAGGHSGHILYDWYMGRELNPRITIPFIGEVDIKSFMELRPGMIGWVLLDLAFAAKQYKSYGYITDSMRKWTPLLLGIHVLTIHPVIVIISQSVYVFDALYMEPAILTTMDLTTDGFGFMLSFGDLVWVPFIYSIQAKYLSVHPVALGPLYVALILTIQATGYYIFRATNNDKNIFRTNPNDPKVAHLKYIETGTGSRLLTTGWWGTARHINYLGDWLMSWSYCLPTLAAGYKLTPTILFENSRLVSTDGMKGAGIPITYFYMLYFAILLIHRERRDEAKCRRKYGAHWEKYCQIVRWRILPGVY</sequence>
<feature type="chain" id="PRO_0000207498" description="Delta(14)-sterol reductase">
    <location>
        <begin position="1"/>
        <end position="512"/>
    </location>
</feature>
<feature type="transmembrane region" description="Helical" evidence="3">
    <location>
        <begin position="27"/>
        <end position="47"/>
    </location>
</feature>
<feature type="transmembrane region" description="Helical" evidence="3">
    <location>
        <begin position="100"/>
        <end position="120"/>
    </location>
</feature>
<feature type="transmembrane region" description="Helical" evidence="3">
    <location>
        <begin position="140"/>
        <end position="160"/>
    </location>
</feature>
<feature type="transmembrane region" description="Helical" evidence="3">
    <location>
        <begin position="172"/>
        <end position="192"/>
    </location>
</feature>
<feature type="transmembrane region" description="Helical" evidence="3">
    <location>
        <begin position="242"/>
        <end position="262"/>
    </location>
</feature>
<feature type="transmembrane region" description="Helical" evidence="3">
    <location>
        <begin position="278"/>
        <end position="298"/>
    </location>
</feature>
<feature type="transmembrane region" description="Helical" evidence="3">
    <location>
        <begin position="324"/>
        <end position="344"/>
    </location>
</feature>
<feature type="transmembrane region" description="Helical" evidence="3">
    <location>
        <begin position="353"/>
        <end position="373"/>
    </location>
</feature>
<feature type="transmembrane region" description="Helical" evidence="3">
    <location>
        <begin position="418"/>
        <end position="438"/>
    </location>
</feature>
<feature type="transmembrane region" description="Helical" evidence="3">
    <location>
        <begin position="458"/>
        <end position="478"/>
    </location>
</feature>
<feature type="binding site" evidence="2">
    <location>
        <position position="380"/>
    </location>
    <ligand>
        <name>NADP(+)</name>
        <dbReference type="ChEBI" id="CHEBI:58349"/>
    </ligand>
</feature>
<feature type="binding site" evidence="2">
    <location>
        <position position="384"/>
    </location>
    <ligand>
        <name>NADP(+)</name>
        <dbReference type="ChEBI" id="CHEBI:58349"/>
    </ligand>
</feature>
<feature type="binding site" evidence="2">
    <location>
        <position position="407"/>
    </location>
    <ligand>
        <name>NADP(+)</name>
        <dbReference type="ChEBI" id="CHEBI:58349"/>
    </ligand>
</feature>
<feature type="binding site" evidence="2">
    <location>
        <position position="412"/>
    </location>
    <ligand>
        <name>NADP(+)</name>
        <dbReference type="ChEBI" id="CHEBI:58349"/>
    </ligand>
</feature>
<feature type="binding site" evidence="2">
    <location>
        <begin position="419"/>
        <end position="420"/>
    </location>
    <ligand>
        <name>NADP(+)</name>
        <dbReference type="ChEBI" id="CHEBI:58349"/>
    </ligand>
</feature>
<feature type="binding site" evidence="2">
    <location>
        <position position="484"/>
    </location>
    <ligand>
        <name>NADP(+)</name>
        <dbReference type="ChEBI" id="CHEBI:58349"/>
    </ligand>
</feature>
<feature type="binding site" evidence="2">
    <location>
        <begin position="488"/>
        <end position="492"/>
    </location>
    <ligand>
        <name>NADP(+)</name>
        <dbReference type="ChEBI" id="CHEBI:58349"/>
    </ligand>
</feature>
<feature type="binding site" evidence="2">
    <location>
        <position position="499"/>
    </location>
    <ligand>
        <name>NADP(+)</name>
        <dbReference type="ChEBI" id="CHEBI:58349"/>
    </ligand>
</feature>
<protein>
    <recommendedName>
        <fullName>Delta(14)-sterol reductase</fullName>
        <ecNumber>1.3.1.70</ecNumber>
    </recommendedName>
    <alternativeName>
        <fullName>C-14 sterol reductase</fullName>
    </alternativeName>
    <alternativeName>
        <fullName>Sterol C14-reductase</fullName>
    </alternativeName>
</protein>
<gene>
    <name type="primary">ERG3</name>
</gene>
<name>ERG24_SEPLY</name>
<comment type="function">
    <text evidence="1">Reduces the C14=C15 double bond of 4,4-dimethyl-cholesta-8,14,24-trienol to produce 4,4-dimethyl-cholesta-8,24-dienol.</text>
</comment>
<comment type="catalytic activity">
    <reaction>
        <text>4,4-dimethyl-5alpha-cholesta-8,24-dien-3beta-ol + NADP(+) = 4,4-dimethyl-5alpha-cholesta-8,14,24-trien-3beta-ol + NADPH + H(+)</text>
        <dbReference type="Rhea" id="RHEA:18561"/>
        <dbReference type="ChEBI" id="CHEBI:15378"/>
        <dbReference type="ChEBI" id="CHEBI:17813"/>
        <dbReference type="ChEBI" id="CHEBI:18364"/>
        <dbReference type="ChEBI" id="CHEBI:57783"/>
        <dbReference type="ChEBI" id="CHEBI:58349"/>
        <dbReference type="EC" id="1.3.1.70"/>
    </reaction>
</comment>
<comment type="pathway">
    <text>Steroid biosynthesis; zymosterol biosynthesis; zymosterol from lanosterol: step 2/6.</text>
</comment>
<comment type="subcellular location">
    <subcellularLocation>
        <location evidence="4">Membrane</location>
        <topology evidence="4">Multi-pass membrane protein</topology>
    </subcellularLocation>
</comment>
<comment type="similarity">
    <text evidence="4">Belongs to the ERG4/ERG24 family.</text>
</comment>
<dbReference type="EC" id="1.3.1.70"/>
<dbReference type="EMBL" id="Y14389">
    <property type="protein sequence ID" value="CAA74747.1"/>
    <property type="molecule type" value="Genomic_DNA"/>
</dbReference>
<dbReference type="SMR" id="O13597"/>
<dbReference type="UniPathway" id="UPA00770">
    <property type="reaction ID" value="UER00755"/>
</dbReference>
<dbReference type="GO" id="GO:0005789">
    <property type="term" value="C:endoplasmic reticulum membrane"/>
    <property type="evidence" value="ECO:0007669"/>
    <property type="project" value="TreeGrafter"/>
</dbReference>
<dbReference type="GO" id="GO:0050613">
    <property type="term" value="F:Delta14-sterol reductase activity"/>
    <property type="evidence" value="ECO:0007669"/>
    <property type="project" value="UniProtKB-EC"/>
</dbReference>
<dbReference type="GO" id="GO:0050661">
    <property type="term" value="F:NADP binding"/>
    <property type="evidence" value="ECO:0000250"/>
    <property type="project" value="UniProtKB"/>
</dbReference>
<dbReference type="GO" id="GO:0006696">
    <property type="term" value="P:ergosterol biosynthetic process"/>
    <property type="evidence" value="ECO:0007669"/>
    <property type="project" value="TreeGrafter"/>
</dbReference>
<dbReference type="FunFam" id="1.20.120.1630:FF:000008">
    <property type="entry name" value="C-14 sterol reductase"/>
    <property type="match status" value="1"/>
</dbReference>
<dbReference type="Gene3D" id="1.20.120.1630">
    <property type="match status" value="1"/>
</dbReference>
<dbReference type="InterPro" id="IPR001171">
    <property type="entry name" value="ERG24_DHCR-like"/>
</dbReference>
<dbReference type="InterPro" id="IPR018083">
    <property type="entry name" value="Sterol_reductase_CS"/>
</dbReference>
<dbReference type="PANTHER" id="PTHR21257">
    <property type="entry name" value="DELTA(14)-STEROL REDUCTASE"/>
    <property type="match status" value="1"/>
</dbReference>
<dbReference type="PANTHER" id="PTHR21257:SF52">
    <property type="entry name" value="DELTA(14)-STEROL REDUCTASE TM7SF2"/>
    <property type="match status" value="1"/>
</dbReference>
<dbReference type="Pfam" id="PF01222">
    <property type="entry name" value="ERG4_ERG24"/>
    <property type="match status" value="1"/>
</dbReference>
<dbReference type="PROSITE" id="PS01017">
    <property type="entry name" value="STEROL_REDUCT_1"/>
    <property type="match status" value="1"/>
</dbReference>
<dbReference type="PROSITE" id="PS01018">
    <property type="entry name" value="STEROL_REDUCT_2"/>
    <property type="match status" value="1"/>
</dbReference>
<evidence type="ECO:0000250" key="1"/>
<evidence type="ECO:0000250" key="2">
    <source>
        <dbReference type="UniProtKB" id="G4SW86"/>
    </source>
</evidence>
<evidence type="ECO:0000255" key="3"/>
<evidence type="ECO:0000305" key="4"/>
<accession>O13597</accession>
<organism>
    <name type="scientific">Septoria lycopersici</name>
    <name type="common">Tomato leaf spot fungus</name>
    <dbReference type="NCBI Taxonomy" id="39703"/>
    <lineage>
        <taxon>Eukaryota</taxon>
        <taxon>Fungi</taxon>
        <taxon>Dikarya</taxon>
        <taxon>Ascomycota</taxon>
        <taxon>Pezizomycotina</taxon>
        <taxon>Dothideomycetes</taxon>
        <taxon>Dothideomycetidae</taxon>
        <taxon>Mycosphaerellales</taxon>
        <taxon>Mycosphaerellaceae</taxon>
        <taxon>Septoria</taxon>
    </lineage>
</organism>
<proteinExistence type="inferred from homology"/>
<keyword id="KW-0444">Lipid biosynthesis</keyword>
<keyword id="KW-0443">Lipid metabolism</keyword>
<keyword id="KW-0472">Membrane</keyword>
<keyword id="KW-0521">NADP</keyword>
<keyword id="KW-0560">Oxidoreductase</keyword>
<keyword id="KW-0752">Steroid biosynthesis</keyword>
<keyword id="KW-0753">Steroid metabolism</keyword>
<keyword id="KW-0756">Sterol biosynthesis</keyword>
<keyword id="KW-1207">Sterol metabolism</keyword>
<keyword id="KW-0812">Transmembrane</keyword>
<keyword id="KW-1133">Transmembrane helix</keyword>